<proteinExistence type="inferred from homology"/>
<name>UVSX_BPT2</name>
<dbReference type="EMBL" id="X68724">
    <property type="protein sequence ID" value="CAA48665.1"/>
    <property type="molecule type" value="Genomic_DNA"/>
</dbReference>
<dbReference type="PIR" id="S35624">
    <property type="entry name" value="S35624"/>
</dbReference>
<dbReference type="GO" id="GO:0005524">
    <property type="term" value="F:ATP binding"/>
    <property type="evidence" value="ECO:0007669"/>
    <property type="project" value="UniProtKB-KW"/>
</dbReference>
<dbReference type="GO" id="GO:0006310">
    <property type="term" value="P:DNA recombination"/>
    <property type="evidence" value="ECO:0007669"/>
    <property type="project" value="UniProtKB-KW"/>
</dbReference>
<dbReference type="GO" id="GO:0006281">
    <property type="term" value="P:DNA repair"/>
    <property type="evidence" value="ECO:0007669"/>
    <property type="project" value="UniProtKB-KW"/>
</dbReference>
<dbReference type="GO" id="GO:0006260">
    <property type="term" value="P:DNA replication"/>
    <property type="evidence" value="ECO:0007669"/>
    <property type="project" value="UniProtKB-KW"/>
</dbReference>
<gene>
    <name type="primary">UVSX</name>
</gene>
<organismHost>
    <name type="scientific">Escherichia coli</name>
    <dbReference type="NCBI Taxonomy" id="562"/>
</organismHost>
<evidence type="ECO:0000305" key="1"/>
<comment type="function">
    <text>Important in genetic recombination, DNA repair, and replication. Possesses pairing and strand-transfer activity. Interacts with dda and gene 32 proteins.</text>
</comment>
<comment type="similarity">
    <text evidence="1">Belongs to the RecA family.</text>
</comment>
<protein>
    <recommendedName>
        <fullName>Recombination and repair protein</fullName>
    </recommendedName>
</protein>
<reference key="1">
    <citation type="journal article" date="1993" name="Nucleic Acids Res.">
        <title>Cloning and sequencing of the genes of beta-glucosyl-HMC-alpha-glucosyl-transferases of bacteriophages T2 and T6.</title>
        <authorList>
            <person name="Winkler M."/>
            <person name="Rueger W."/>
        </authorList>
    </citation>
    <scope>NUCLEOTIDE SEQUENCE [GENOMIC DNA]</scope>
</reference>
<accession>Q06727</accession>
<sequence>MSIADLKSRLIKASTSKMTAEL</sequence>
<feature type="chain" id="PRO_0000122959" description="Recombination and repair protein">
    <location>
        <begin position="1"/>
        <end position="22" status="greater than"/>
    </location>
</feature>
<feature type="non-terminal residue">
    <location>
        <position position="22"/>
    </location>
</feature>
<keyword id="KW-0067">ATP-binding</keyword>
<keyword id="KW-0227">DNA damage</keyword>
<keyword id="KW-0233">DNA recombination</keyword>
<keyword id="KW-0234">DNA repair</keyword>
<keyword id="KW-0235">DNA replication</keyword>
<keyword id="KW-0547">Nucleotide-binding</keyword>
<organism>
    <name type="scientific">Enterobacteria phage T2</name>
    <name type="common">Bacteriophage T2</name>
    <dbReference type="NCBI Taxonomy" id="2060721"/>
    <lineage>
        <taxon>Viruses</taxon>
        <taxon>Duplodnaviria</taxon>
        <taxon>Heunggongvirae</taxon>
        <taxon>Uroviricota</taxon>
        <taxon>Caudoviricetes</taxon>
        <taxon>Straboviridae</taxon>
        <taxon>Tevenvirinae</taxon>
        <taxon>Tequatrovirus</taxon>
        <taxon>Tequatrovirus T2</taxon>
    </lineage>
</organism>